<accession>O62518</accession>
<feature type="chain" id="PRO_0000120265" description="Brix domain-containing protein ZK795.3">
    <location>
        <begin position="1"/>
        <end position="292"/>
    </location>
</feature>
<feature type="domain" description="Brix" evidence="1">
    <location>
        <begin position="78"/>
        <end position="259"/>
    </location>
</feature>
<reference key="1">
    <citation type="journal article" date="1998" name="Science">
        <title>Genome sequence of the nematode C. elegans: a platform for investigating biology.</title>
        <authorList>
            <consortium name="The C. elegans sequencing consortium"/>
        </authorList>
    </citation>
    <scope>NUCLEOTIDE SEQUENCE [LARGE SCALE GENOMIC DNA]</scope>
    <source>
        <strain>Bristol N2</strain>
    </source>
</reference>
<keyword id="KW-1185">Reference proteome</keyword>
<proteinExistence type="predicted"/>
<sequence>MIRRENRLRREFIFRKSLEEKQKSLEEKREKIRNALENNTKIDYNLRKDAIELAKGSDWGGQQYETDSEYRWAGAQDPKIVITTSRDPSSRLKMFAKEMKLIFPNAQRINRGHYDVKQVVQASKAQDSTDLIIFTETRGNPDGMLVCHLPFGPTAFFSMANVVMRHDIPNCGTMSEQYPHLIFDNLNSKLGHRFTTILKHLFPVPKPDSKRIITFSNSEDYISFRHHVYKTENDGEVELTEAGPRFELKPYQIKLGTLETLAAAEDEWVLRSYTNTARKRTFLSISRADDDE</sequence>
<protein>
    <recommendedName>
        <fullName>Brix domain-containing protein ZK795.3</fullName>
    </recommendedName>
</protein>
<organism>
    <name type="scientific">Caenorhabditis elegans</name>
    <dbReference type="NCBI Taxonomy" id="6239"/>
    <lineage>
        <taxon>Eukaryota</taxon>
        <taxon>Metazoa</taxon>
        <taxon>Ecdysozoa</taxon>
        <taxon>Nematoda</taxon>
        <taxon>Chromadorea</taxon>
        <taxon>Rhabditida</taxon>
        <taxon>Rhabditina</taxon>
        <taxon>Rhabditomorpha</taxon>
        <taxon>Rhabditoidea</taxon>
        <taxon>Rhabditidae</taxon>
        <taxon>Peloderinae</taxon>
        <taxon>Caenorhabditis</taxon>
    </lineage>
</organism>
<gene>
    <name type="ORF">ZK795.3</name>
</gene>
<name>YHPK_CAEEL</name>
<evidence type="ECO:0000255" key="1">
    <source>
        <dbReference type="PROSITE-ProRule" id="PRU00034"/>
    </source>
</evidence>
<dbReference type="EMBL" id="Z83246">
    <property type="protein sequence ID" value="CAB05841.1"/>
    <property type="molecule type" value="Genomic_DNA"/>
</dbReference>
<dbReference type="PIR" id="T27998">
    <property type="entry name" value="T27998"/>
</dbReference>
<dbReference type="RefSeq" id="NP_502404.1">
    <property type="nucleotide sequence ID" value="NM_070003.6"/>
</dbReference>
<dbReference type="SMR" id="O62518"/>
<dbReference type="BioGRID" id="43300">
    <property type="interactions" value="6"/>
</dbReference>
<dbReference type="FunCoup" id="O62518">
    <property type="interactions" value="2712"/>
</dbReference>
<dbReference type="IntAct" id="O62518">
    <property type="interactions" value="1"/>
</dbReference>
<dbReference type="STRING" id="6239.ZK795.3.1"/>
<dbReference type="PaxDb" id="6239-ZK795.3"/>
<dbReference type="PeptideAtlas" id="O62518"/>
<dbReference type="EnsemblMetazoa" id="ZK795.3.1">
    <property type="protein sequence ID" value="ZK795.3.1"/>
    <property type="gene ID" value="WBGene00014083"/>
</dbReference>
<dbReference type="GeneID" id="178207"/>
<dbReference type="KEGG" id="cel:CELE_ZK795.3"/>
<dbReference type="UCSC" id="ZK795.3">
    <property type="organism name" value="c. elegans"/>
</dbReference>
<dbReference type="AGR" id="WB:WBGene00014083"/>
<dbReference type="CTD" id="178207"/>
<dbReference type="WormBase" id="ZK795.3">
    <property type="protein sequence ID" value="CE18464"/>
    <property type="gene ID" value="WBGene00014083"/>
</dbReference>
<dbReference type="eggNOG" id="KOG2781">
    <property type="taxonomic scope" value="Eukaryota"/>
</dbReference>
<dbReference type="GeneTree" id="ENSGT00940000153231"/>
<dbReference type="HOGENOM" id="CLU_040063_2_0_1"/>
<dbReference type="InParanoid" id="O62518"/>
<dbReference type="OMA" id="IGTMSEQ"/>
<dbReference type="OrthoDB" id="10253204at2759"/>
<dbReference type="PhylomeDB" id="O62518"/>
<dbReference type="Reactome" id="R-CEL-6791226">
    <property type="pathway name" value="Major pathway of rRNA processing in the nucleolus and cytosol"/>
</dbReference>
<dbReference type="PRO" id="PR:O62518"/>
<dbReference type="Proteomes" id="UP000001940">
    <property type="component" value="Chromosome IV"/>
</dbReference>
<dbReference type="Bgee" id="WBGene00014083">
    <property type="expression patterns" value="Expressed in germ line (C elegans) and 4 other cell types or tissues"/>
</dbReference>
<dbReference type="GO" id="GO:0034457">
    <property type="term" value="C:Mpp10 complex"/>
    <property type="evidence" value="ECO:0000318"/>
    <property type="project" value="GO_Central"/>
</dbReference>
<dbReference type="GO" id="GO:0005730">
    <property type="term" value="C:nucleolus"/>
    <property type="evidence" value="ECO:0000318"/>
    <property type="project" value="GO_Central"/>
</dbReference>
<dbReference type="GO" id="GO:0032040">
    <property type="term" value="C:small-subunit processome"/>
    <property type="evidence" value="ECO:0000318"/>
    <property type="project" value="GO_Central"/>
</dbReference>
<dbReference type="GO" id="GO:0042134">
    <property type="term" value="F:rRNA primary transcript binding"/>
    <property type="evidence" value="ECO:0007669"/>
    <property type="project" value="InterPro"/>
</dbReference>
<dbReference type="GO" id="GO:0030515">
    <property type="term" value="F:snoRNA binding"/>
    <property type="evidence" value="ECO:0000318"/>
    <property type="project" value="GO_Central"/>
</dbReference>
<dbReference type="GO" id="GO:0006364">
    <property type="term" value="P:rRNA processing"/>
    <property type="evidence" value="ECO:0000318"/>
    <property type="project" value="GO_Central"/>
</dbReference>
<dbReference type="FunFam" id="3.40.50.10480:FF:000001">
    <property type="entry name" value="IMP4, U3 small nucleolar ribonucleoprotein"/>
    <property type="match status" value="1"/>
</dbReference>
<dbReference type="Gene3D" id="3.40.50.10480">
    <property type="entry name" value="Probable brix-domain ribosomal biogenesis protein"/>
    <property type="match status" value="1"/>
</dbReference>
<dbReference type="InterPro" id="IPR007109">
    <property type="entry name" value="Brix"/>
</dbReference>
<dbReference type="InterPro" id="IPR044281">
    <property type="entry name" value="IMP4/RPF1"/>
</dbReference>
<dbReference type="PANTHER" id="PTHR22734">
    <property type="entry name" value="U3 SMALL NUCLEOLAR RIBONUCLEOPROTEIN PROTEIN IMP4"/>
    <property type="match status" value="1"/>
</dbReference>
<dbReference type="PANTHER" id="PTHR22734:SF2">
    <property type="entry name" value="U3 SMALL NUCLEOLAR RIBONUCLEOPROTEIN PROTEIN IMP4"/>
    <property type="match status" value="1"/>
</dbReference>
<dbReference type="Pfam" id="PF04427">
    <property type="entry name" value="Brix"/>
    <property type="match status" value="1"/>
</dbReference>
<dbReference type="SMART" id="SM00879">
    <property type="entry name" value="Brix"/>
    <property type="match status" value="1"/>
</dbReference>
<dbReference type="SUPFAM" id="SSF52954">
    <property type="entry name" value="Class II aaRS ABD-related"/>
    <property type="match status" value="1"/>
</dbReference>
<dbReference type="PROSITE" id="PS50833">
    <property type="entry name" value="BRIX"/>
    <property type="match status" value="1"/>
</dbReference>